<dbReference type="EMBL" id="FN393070">
    <property type="protein sequence ID" value="CAY79688.1"/>
    <property type="molecule type" value="Genomic_DNA"/>
</dbReference>
<dbReference type="SMR" id="C8Z8H2"/>
<dbReference type="HOGENOM" id="CLU_069890_0_0_1"/>
<dbReference type="OrthoDB" id="6733at4893"/>
<dbReference type="Proteomes" id="UP000000286">
    <property type="component" value="Chromosome VII, Scaffold EC1118_1G1"/>
</dbReference>
<dbReference type="GO" id="GO:0005737">
    <property type="term" value="C:cytoplasm"/>
    <property type="evidence" value="ECO:0007669"/>
    <property type="project" value="UniProtKB-KW"/>
</dbReference>
<dbReference type="GO" id="GO:0031965">
    <property type="term" value="C:nuclear membrane"/>
    <property type="evidence" value="ECO:0007669"/>
    <property type="project" value="UniProtKB-SubCell"/>
</dbReference>
<dbReference type="GO" id="GO:0005816">
    <property type="term" value="C:spindle pole body"/>
    <property type="evidence" value="ECO:0007669"/>
    <property type="project" value="UniProtKB-SubCell"/>
</dbReference>
<dbReference type="GO" id="GO:0071988">
    <property type="term" value="P:protein localization to spindle pole body"/>
    <property type="evidence" value="ECO:0007669"/>
    <property type="project" value="InterPro"/>
</dbReference>
<dbReference type="GO" id="GO:0030474">
    <property type="term" value="P:spindle pole body duplication"/>
    <property type="evidence" value="ECO:0007669"/>
    <property type="project" value="InterPro"/>
</dbReference>
<dbReference type="InterPro" id="IPR031433">
    <property type="entry name" value="Mps2"/>
</dbReference>
<dbReference type="Pfam" id="PF17060">
    <property type="entry name" value="MPS2"/>
    <property type="match status" value="1"/>
</dbReference>
<evidence type="ECO:0000250" key="1"/>
<evidence type="ECO:0000255" key="2"/>
<evidence type="ECO:0000256" key="3">
    <source>
        <dbReference type="SAM" id="MobiDB-lite"/>
    </source>
</evidence>
<evidence type="ECO:0000305" key="4"/>
<comment type="function">
    <text evidence="1">Component of the spindle pole body (SPB) required for insertion of the nascent SPB into the nuclear envelope and for the proper execution of spindle pole body (SPB) duplication.</text>
</comment>
<comment type="subunit">
    <text evidence="1">Interacts with BBP1, MPS3, and SPC24.</text>
</comment>
<comment type="subcellular location">
    <subcellularLocation>
        <location evidence="1">Nucleus membrane</location>
        <topology evidence="1">Single-pass membrane protein</topology>
    </subcellularLocation>
    <subcellularLocation>
        <location evidence="1">Cytoplasm</location>
        <location evidence="1">Cytoskeleton</location>
        <location evidence="1">Microtubule organizing center</location>
        <location evidence="1">Spindle pole body</location>
    </subcellularLocation>
</comment>
<comment type="similarity">
    <text evidence="4">Belongs to the MPS2 family.</text>
</comment>
<reference key="1">
    <citation type="journal article" date="2009" name="Proc. Natl. Acad. Sci. U.S.A.">
        <title>Eukaryote-to-eukaryote gene transfer events revealed by the genome sequence of the wine yeast Saccharomyces cerevisiae EC1118.</title>
        <authorList>
            <person name="Novo M."/>
            <person name="Bigey F."/>
            <person name="Beyne E."/>
            <person name="Galeote V."/>
            <person name="Gavory F."/>
            <person name="Mallet S."/>
            <person name="Cambon B."/>
            <person name="Legras J.-L."/>
            <person name="Wincker P."/>
            <person name="Casaregola S."/>
            <person name="Dequin S."/>
        </authorList>
    </citation>
    <scope>NUCLEOTIDE SEQUENCE [LARGE SCALE GENOMIC DNA]</scope>
    <source>
        <strain>Lalvin EC1118 / Prise de mousse</strain>
    </source>
</reference>
<sequence length="387" mass="44558">MSNGAFDAIFEYAWGQIDKPISGDFIYGKDLPKLIEIIENIFQKAQKSGSYELRLPLFSEINKDLFRTFSNTKTFFKIHKEEFDDIFFNLVNHPLREILENAFIGVDSIPSDFIVSMNLNSPSKFLVENKSKNTEGAGISTPRKKLTESPIKLLSRNNIGKALEVQVEELKRELTAKQSLLQENERQVSELKIRLETYQEKYASIQQRFSDLQKARQVEDNQNSSRTSDPGSPLVTGIDQKAILEEFRRRLQRQTDTISFLKDQIRRERGLNCSNDKVSHSKRKHATTDGDGTFKNFISAVPSNIWVKATIRIIVCFALLAGVLPYIRKYVYAHDTPSQNSRLQLSWWENSGILSKIVWFFEDQTDLETEYRSNANVDDAYSRVFGI</sequence>
<keyword id="KW-0175">Coiled coil</keyword>
<keyword id="KW-0963">Cytoplasm</keyword>
<keyword id="KW-0206">Cytoskeleton</keyword>
<keyword id="KW-0472">Membrane</keyword>
<keyword id="KW-0539">Nucleus</keyword>
<keyword id="KW-0812">Transmembrane</keyword>
<keyword id="KW-1133">Transmembrane helix</keyword>
<proteinExistence type="inferred from homology"/>
<feature type="chain" id="PRO_0000409162" description="Monopolar spindle protein 2">
    <location>
        <begin position="1"/>
        <end position="387"/>
    </location>
</feature>
<feature type="transmembrane region" description="Helical" evidence="2">
    <location>
        <begin position="311"/>
        <end position="327"/>
    </location>
</feature>
<feature type="region of interest" description="Disordered" evidence="3">
    <location>
        <begin position="216"/>
        <end position="235"/>
    </location>
</feature>
<feature type="coiled-coil region" evidence="2">
    <location>
        <begin position="157"/>
        <end position="269"/>
    </location>
</feature>
<feature type="compositionally biased region" description="Polar residues" evidence="3">
    <location>
        <begin position="220"/>
        <end position="230"/>
    </location>
</feature>
<accession>C8Z8H2</accession>
<protein>
    <recommendedName>
        <fullName>Monopolar spindle protein 2</fullName>
    </recommendedName>
</protein>
<organism>
    <name type="scientific">Saccharomyces cerevisiae (strain Lalvin EC1118 / Prise de mousse)</name>
    <name type="common">Baker's yeast</name>
    <dbReference type="NCBI Taxonomy" id="643680"/>
    <lineage>
        <taxon>Eukaryota</taxon>
        <taxon>Fungi</taxon>
        <taxon>Dikarya</taxon>
        <taxon>Ascomycota</taxon>
        <taxon>Saccharomycotina</taxon>
        <taxon>Saccharomycetes</taxon>
        <taxon>Saccharomycetales</taxon>
        <taxon>Saccharomycetaceae</taxon>
        <taxon>Saccharomyces</taxon>
    </lineage>
</organism>
<gene>
    <name type="primary">MPS2</name>
    <name type="synonym">MMC1</name>
    <name type="ORF">EC1118_1G1_2146g</name>
</gene>
<name>MPS2_YEAS8</name>